<dbReference type="EMBL" id="AB241456">
    <property type="protein sequence ID" value="BAE72690.1"/>
    <property type="molecule type" value="Genomic_DNA"/>
</dbReference>
<dbReference type="EMBL" id="AB241457">
    <property type="protein sequence ID" value="BAE72691.1"/>
    <property type="molecule type" value="mRNA"/>
</dbReference>
<dbReference type="EMBL" id="DQ665943">
    <property type="protein sequence ID" value="ABG49438.1"/>
    <property type="molecule type" value="Genomic_DNA"/>
</dbReference>
<dbReference type="EMBL" id="EF053276">
    <property type="protein sequence ID" value="ABK35068.1"/>
    <property type="molecule type" value="Genomic_DNA"/>
</dbReference>
<dbReference type="SMR" id="Q2PEG7"/>
<dbReference type="GO" id="GO:0005783">
    <property type="term" value="C:endoplasmic reticulum"/>
    <property type="evidence" value="ECO:0007669"/>
    <property type="project" value="UniProtKB-SubCell"/>
</dbReference>
<dbReference type="GO" id="GO:0031965">
    <property type="term" value="C:nuclear membrane"/>
    <property type="evidence" value="ECO:0007669"/>
    <property type="project" value="UniProtKB-SubCell"/>
</dbReference>
<dbReference type="GO" id="GO:0005634">
    <property type="term" value="C:nucleus"/>
    <property type="evidence" value="ECO:0000314"/>
    <property type="project" value="UniProtKB"/>
</dbReference>
<dbReference type="GO" id="GO:0009877">
    <property type="term" value="P:nodulation"/>
    <property type="evidence" value="ECO:0007669"/>
    <property type="project" value="UniProtKB-KW"/>
</dbReference>
<dbReference type="InterPro" id="IPR005202">
    <property type="entry name" value="TF_GRAS"/>
</dbReference>
<dbReference type="PANTHER" id="PTHR31636">
    <property type="entry name" value="OSJNBA0084A10.13 PROTEIN-RELATED"/>
    <property type="match status" value="1"/>
</dbReference>
<dbReference type="Pfam" id="PF03514">
    <property type="entry name" value="GRAS"/>
    <property type="match status" value="1"/>
</dbReference>
<dbReference type="PROSITE" id="PS50985">
    <property type="entry name" value="GRAS"/>
    <property type="match status" value="1"/>
</dbReference>
<evidence type="ECO:0000250" key="1">
    <source>
        <dbReference type="UniProtKB" id="Q5NE24"/>
    </source>
</evidence>
<evidence type="ECO:0000255" key="2">
    <source>
        <dbReference type="PROSITE-ProRule" id="PRU01191"/>
    </source>
</evidence>
<evidence type="ECO:0000256" key="3">
    <source>
        <dbReference type="SAM" id="MobiDB-lite"/>
    </source>
</evidence>
<evidence type="ECO:0000269" key="4">
    <source>
    </source>
</evidence>
<evidence type="ECO:0000269" key="5">
    <source>
    </source>
</evidence>
<evidence type="ECO:0000269" key="6">
    <source>
    </source>
</evidence>
<evidence type="ECO:0000269" key="7">
    <source>
    </source>
</evidence>
<evidence type="ECO:0000269" key="8">
    <source>
    </source>
</evidence>
<evidence type="ECO:0000269" key="9">
    <source>
    </source>
</evidence>
<evidence type="ECO:0000269" key="10">
    <source>
    </source>
</evidence>
<evidence type="ECO:0000303" key="11">
    <source>
    </source>
</evidence>
<evidence type="ECO:0000305" key="12"/>
<evidence type="ECO:0000305" key="13">
    <source>
    </source>
</evidence>
<evidence type="ECO:0000305" key="14">
    <source>
    </source>
</evidence>
<evidence type="ECO:0000312" key="15">
    <source>
        <dbReference type="EMBL" id="BAE72690.1"/>
    </source>
</evidence>
<organism>
    <name type="scientific">Lotus japonicus</name>
    <name type="common">Lotus corniculatus var. japonicus</name>
    <dbReference type="NCBI Taxonomy" id="34305"/>
    <lineage>
        <taxon>Eukaryota</taxon>
        <taxon>Viridiplantae</taxon>
        <taxon>Streptophyta</taxon>
        <taxon>Embryophyta</taxon>
        <taxon>Tracheophyta</taxon>
        <taxon>Spermatophyta</taxon>
        <taxon>Magnoliopsida</taxon>
        <taxon>eudicotyledons</taxon>
        <taxon>Gunneridae</taxon>
        <taxon>Pentapetalae</taxon>
        <taxon>rosids</taxon>
        <taxon>fabids</taxon>
        <taxon>Fabales</taxon>
        <taxon>Fabaceae</taxon>
        <taxon>Papilionoideae</taxon>
        <taxon>50 kb inversion clade</taxon>
        <taxon>NPAAA clade</taxon>
        <taxon>Hologalegina</taxon>
        <taxon>robinioid clade</taxon>
        <taxon>Loteae</taxon>
        <taxon>Lotus</taxon>
    </lineage>
</organism>
<reference key="1">
    <citation type="journal article" date="2006" name="DNA Res.">
        <title>Positional cloning identifies Lotus japonicus NSP2, a putative transcription factor of the GRAS family, required for NIN and ENOD40 gene expression in nodule initiation.</title>
        <authorList>
            <person name="Murakami Y."/>
            <person name="Miwa H."/>
            <person name="Imaizumi-Anraku H."/>
            <person name="Kouchi H."/>
            <person name="Downie J.A."/>
            <person name="Kawaguchi M."/>
            <person name="Kawasaki S."/>
        </authorList>
    </citation>
    <scope>NUCLEOTIDE SEQUENCE [GENOMIC DNA / MRNA]</scope>
    <scope>FUNCTION</scope>
    <scope>SUBCELLULAR LOCATION</scope>
    <scope>TISSUE SPECIFICITY</scope>
    <scope>DISRUPTION PHENOTYPE</scope>
    <source>
        <strain>cv. Gifu / B-129</strain>
    </source>
</reference>
<reference key="2">
    <citation type="journal article" date="2006" name="Plant Physiol.">
        <title>Lotus japonicus nodulation requires two GRAS domain regulators, one of which is functionally conserved in a non-legume.</title>
        <authorList>
            <person name="Heckmann A.B."/>
            <person name="Lombardo F."/>
            <person name="Miwa H."/>
            <person name="Perry J.A."/>
            <person name="Bunnewell S."/>
            <person name="Parniske M."/>
            <person name="Wang T.L."/>
            <person name="Downie J.A."/>
        </authorList>
    </citation>
    <scope>NUCLEOTIDE SEQUENCE [GENOMIC DNA]</scope>
    <scope>FUNCTION</scope>
    <scope>TISSUE SPECIFICITY</scope>
    <scope>INDUCTION</scope>
    <source>
        <strain>cv. Gifu / B-129</strain>
    </source>
</reference>
<reference key="3">
    <citation type="journal article" date="2010" name="Plant Cell Physiol.">
        <title>Function of GRAS proteins in root nodule symbiosis is retained in homologs of a non-legume, rice.</title>
        <authorList>
            <person name="Yokota K."/>
            <person name="Soyano T."/>
            <person name="Kouchi H."/>
            <person name="Hayashi M."/>
        </authorList>
    </citation>
    <scope>FUNCTION</scope>
</reference>
<reference key="4">
    <citation type="journal article" date="2013" name="Plant Cell Physiol.">
        <title>Down-regulation of NSP2 expression in developmentally young regions of Lotus japonicus roots in response to rhizobial inoculation.</title>
        <authorList>
            <person name="Murakami Y."/>
            <person name="Yokoyama H."/>
            <person name="Fukui R."/>
            <person name="Kawaguchi M."/>
        </authorList>
    </citation>
    <scope>FUNCTION</scope>
    <scope>INDUCTION</scope>
</reference>
<reference key="5">
    <citation type="journal article" date="2013" name="Plant Cell Physiol.">
        <title>CERBERUS and NSP1 of Lotus japonicus are common symbiosis genes that modulate arbuscular mycorrhiza development.</title>
        <authorList>
            <person name="Takeda N."/>
            <person name="Tsuzuki S."/>
            <person name="Suzaki T."/>
            <person name="Parniske M."/>
            <person name="Kawaguchi M."/>
        </authorList>
    </citation>
    <scope>FUNCTION</scope>
    <scope>DISRUPTION PHENOTYPE</scope>
</reference>
<reference key="6">
    <citation type="journal article" date="2014" name="New Phytol.">
        <title>A MYB coiled-coil transcription factor interacts with NSP2 and is involved in nodulation in Lotus japonicus.</title>
        <authorList>
            <person name="Kang H."/>
            <person name="Chu X."/>
            <person name="Wang C."/>
            <person name="Xiao A."/>
            <person name="Zhu H."/>
            <person name="Yuan S."/>
            <person name="Yang Z."/>
            <person name="Ke D."/>
            <person name="Xiao S."/>
            <person name="Hong Z."/>
            <person name="Zhang Z."/>
        </authorList>
    </citation>
    <scope>INTERACTION WITH IPN2</scope>
    <scope>SUBCELLULAR LOCATION</scope>
    <scope>MUTAGENESIS OF GLU-224</scope>
</reference>
<reference key="7">
    <citation type="journal article" date="2014" name="Plant J.">
        <title>Rhizobial infection does not require cortical expression of upstream common symbiosis genes responsible for the induction of Ca(2+) spiking.</title>
        <authorList>
            <person name="Hayashi T."/>
            <person name="Shimoda Y."/>
            <person name="Sato S."/>
            <person name="Tabata S."/>
            <person name="Imaizumi-Anraku H."/>
            <person name="Hayashi M."/>
        </authorList>
    </citation>
    <scope>FUNCTION</scope>
    <scope>DISRUPTION PHENOTYPE</scope>
</reference>
<reference key="8">
    <citation type="journal article" date="2015" name="Plant Physiol.">
        <title>Network of GRAS transcription factors involved in the control of arbuscule development in Lotus japonicus.</title>
        <authorList>
            <person name="Xue L."/>
            <person name="Cui H."/>
            <person name="Buer B."/>
            <person name="Vijayakumar V."/>
            <person name="Delaux P.-M."/>
            <person name="Junkermann S."/>
            <person name="Bucher M."/>
        </authorList>
    </citation>
    <scope>INTERACTION WITH RAD1</scope>
    <scope>SUBCELLULAR LOCATION</scope>
    <source>
        <strain>cv. Gifu / B-129</strain>
    </source>
</reference>
<sequence>MEMDIDCIHHLDFSGHSTLTNTPSSDNDNYGCSWNHWSPVVNWDAFTGNQDDFHHLIDSMIDDNNTGPAFSDHTASTTSEEEEEEEATTTTMTTTTTTTTTTPEAADDDFKGLRLVHLLMAGAEALTGANKNRELARVILVRLKELVSHTDGTNMERLAAYFTEALQGLLEGAGGAYNSSSKHHVIGGPHHEPQNDALAAFQLLQDMSPYVKFGHFTANQAIVEAVAHERRVHIVDYDIMEGVQWASLMQALASNPNGPHLRITALSRSGVGRRSMATVQETGRRLTAFATSLGQPFSFHHSRLESDETFRPAGLKLVRGEALVFNCMLNLPHLTYRSPNSVASFLTAAKALRPRLVTVVEEEVGSALGGFVERFMDSLHHFSAVFDSLEAGFPMQGRARALVERVFLGPRIVGSLARIYRTGGGGEERGSWREWLRAAGFSGVAVSSANHCQSNLLLGLFNDGYRVEELGSNKLVLHWKTRRLLSASLWTCSSESDCA</sequence>
<accession>Q2PEG7</accession>
<accession>A1DS15</accession>
<feature type="chain" id="PRO_0000448273" description="Protein NODULATION SIGNALING PATHWAY 2">
    <location>
        <begin position="1"/>
        <end position="499"/>
    </location>
</feature>
<feature type="domain" description="GRAS" evidence="2">
    <location>
        <begin position="106"/>
        <end position="491"/>
    </location>
</feature>
<feature type="region of interest" description="Disordered" evidence="3">
    <location>
        <begin position="64"/>
        <end position="106"/>
    </location>
</feature>
<feature type="region of interest" description="Leucine repeat I (LRI)" evidence="2">
    <location>
        <begin position="113"/>
        <end position="182"/>
    </location>
</feature>
<feature type="region of interest" description="VHIID" evidence="2">
    <location>
        <begin position="201"/>
        <end position="265"/>
    </location>
</feature>
<feature type="region of interest" description="Leucine repeat II (LRII)" evidence="2">
    <location>
        <begin position="281"/>
        <end position="313"/>
    </location>
</feature>
<feature type="region of interest" description="PFYRE" evidence="2">
    <location>
        <begin position="323"/>
        <end position="414"/>
    </location>
</feature>
<feature type="region of interest" description="SAW" evidence="2">
    <location>
        <begin position="417"/>
        <end position="491"/>
    </location>
</feature>
<feature type="short sequence motif" description="VHIID" evidence="2">
    <location>
        <begin position="232"/>
        <end position="236"/>
    </location>
</feature>
<feature type="compositionally biased region" description="Low complexity" evidence="3">
    <location>
        <begin position="88"/>
        <end position="104"/>
    </location>
</feature>
<feature type="mutagenesis site" description="Abolishes the interaction with IPN2; abolishes transactivation activity." evidence="9">
    <original>E</original>
    <variation>K</variation>
    <location>
        <position position="224"/>
    </location>
</feature>
<keyword id="KW-0256">Endoplasmic reticulum</keyword>
<keyword id="KW-0472">Membrane</keyword>
<keyword id="KW-0536">Nodulation</keyword>
<keyword id="KW-0539">Nucleus</keyword>
<keyword id="KW-0804">Transcription</keyword>
<keyword id="KW-0805">Transcription regulation</keyword>
<comment type="function">
    <text evidence="4 5 7 8 13 14">Transcriptional regulator essential for Nod-factor-induced gene expression (Probable) (PubMed:17071642, PubMed:17244637). Acts downstream of calcium spiking and a calcium/calmodulin-dependent protein kinase required for activation of early nodulation gene expression (PubMed:17071642, PubMed:17244637, PubMed:24329948). Transcription factor involved in the induction of NIN and ENOD40 genes, which are required for rhizobial infection and early nodule development (PubMed:17244637). Does not seem to contribute to the early steps of the arbuscular mycorrhizal fungus infection and colonization processes in roots (PubMed:23926062). Transcription factor involved in the positive regulation of the beta-carotene isomerase D27, which participates in a pathway leading to biosynthesis of strigolactones in roots (PubMed:23926062).</text>
</comment>
<comment type="subunit">
    <text evidence="1 9 10">Interacts with IPN2 (PubMed:24400899). Binds to RAD1 (PubMed:25560877). Interacts with RAM1 (By similarity).</text>
</comment>
<comment type="subcellular location">
    <subcellularLocation>
        <location evidence="5 9 10">Nucleus membrane</location>
    </subcellularLocation>
    <subcellularLocation>
        <location evidence="1">Endoplasmic reticulum</location>
    </subcellularLocation>
    <text evidence="1">Mainly localized to the nuclear envelope. Also found in the endoplasmic reticulum. Upon Nod-factor application, the nuclear envelope localization disappears and the protein accumulates in the nucleus.</text>
</comment>
<comment type="tissue specificity">
    <text evidence="4 5">Highly expressed in roots.</text>
</comment>
<comment type="induction">
    <text evidence="4 6">Induced in roots after inoculation with Mesorhizobium loti (PubMed:17071642). Down-regulated in developmentally young regions of roots after inoculation with Mesorhizobium loti (PubMed:23335614).</text>
</comment>
<comment type="disruption phenotype">
    <text evidence="5 7 8">Roots of knockout plants form very few aborted and non-functional nodules under nitrogen limitation when inoculated with Mesorhizobium loti.</text>
</comment>
<comment type="similarity">
    <text evidence="12">Belongs to the GRAS family.</text>
</comment>
<protein>
    <recommendedName>
        <fullName evidence="11">Protein NODULATION SIGNALING PATHWAY 2</fullName>
        <shortName evidence="11">LsNSP2</shortName>
    </recommendedName>
    <alternativeName>
        <fullName evidence="15">Transcription initiator for nodulation</fullName>
    </alternativeName>
</protein>
<name>NSP2_LOTJA</name>
<gene>
    <name evidence="11" type="primary">NSP2</name>
    <name evidence="15" type="synonym">TINOD</name>
</gene>
<proteinExistence type="evidence at protein level"/>